<dbReference type="EC" id="2.8.1.4" evidence="1"/>
<dbReference type="EMBL" id="CP000407">
    <property type="protein sequence ID" value="ABP89743.1"/>
    <property type="molecule type" value="Genomic_DNA"/>
</dbReference>
<dbReference type="SMR" id="A4VUF4"/>
<dbReference type="STRING" id="391295.SSU05_0777"/>
<dbReference type="KEGG" id="ssu:SSU05_0777"/>
<dbReference type="eggNOG" id="COG0301">
    <property type="taxonomic scope" value="Bacteria"/>
</dbReference>
<dbReference type="HOGENOM" id="CLU_037952_4_0_9"/>
<dbReference type="UniPathway" id="UPA00060"/>
<dbReference type="GO" id="GO:0005829">
    <property type="term" value="C:cytosol"/>
    <property type="evidence" value="ECO:0007669"/>
    <property type="project" value="TreeGrafter"/>
</dbReference>
<dbReference type="GO" id="GO:0005524">
    <property type="term" value="F:ATP binding"/>
    <property type="evidence" value="ECO:0007669"/>
    <property type="project" value="UniProtKB-UniRule"/>
</dbReference>
<dbReference type="GO" id="GO:0004810">
    <property type="term" value="F:CCA tRNA nucleotidyltransferase activity"/>
    <property type="evidence" value="ECO:0007669"/>
    <property type="project" value="InterPro"/>
</dbReference>
<dbReference type="GO" id="GO:0000049">
    <property type="term" value="F:tRNA binding"/>
    <property type="evidence" value="ECO:0007669"/>
    <property type="project" value="UniProtKB-UniRule"/>
</dbReference>
<dbReference type="GO" id="GO:0140741">
    <property type="term" value="F:tRNA-uracil-4 sulfurtransferase activity"/>
    <property type="evidence" value="ECO:0007669"/>
    <property type="project" value="UniProtKB-EC"/>
</dbReference>
<dbReference type="GO" id="GO:0009228">
    <property type="term" value="P:thiamine biosynthetic process"/>
    <property type="evidence" value="ECO:0007669"/>
    <property type="project" value="UniProtKB-KW"/>
</dbReference>
<dbReference type="GO" id="GO:0009229">
    <property type="term" value="P:thiamine diphosphate biosynthetic process"/>
    <property type="evidence" value="ECO:0007669"/>
    <property type="project" value="UniProtKB-UniRule"/>
</dbReference>
<dbReference type="GO" id="GO:0052837">
    <property type="term" value="P:thiazole biosynthetic process"/>
    <property type="evidence" value="ECO:0007669"/>
    <property type="project" value="TreeGrafter"/>
</dbReference>
<dbReference type="GO" id="GO:0002937">
    <property type="term" value="P:tRNA 4-thiouridine biosynthesis"/>
    <property type="evidence" value="ECO:0007669"/>
    <property type="project" value="TreeGrafter"/>
</dbReference>
<dbReference type="CDD" id="cd01712">
    <property type="entry name" value="PPase_ThiI"/>
    <property type="match status" value="1"/>
</dbReference>
<dbReference type="CDD" id="cd11716">
    <property type="entry name" value="THUMP_ThiI"/>
    <property type="match status" value="1"/>
</dbReference>
<dbReference type="FunFam" id="3.40.50.620:FF:000053">
    <property type="entry name" value="Probable tRNA sulfurtransferase"/>
    <property type="match status" value="1"/>
</dbReference>
<dbReference type="Gene3D" id="3.30.2130.30">
    <property type="match status" value="1"/>
</dbReference>
<dbReference type="Gene3D" id="3.40.50.620">
    <property type="entry name" value="HUPs"/>
    <property type="match status" value="1"/>
</dbReference>
<dbReference type="HAMAP" id="MF_00021">
    <property type="entry name" value="ThiI"/>
    <property type="match status" value="1"/>
</dbReference>
<dbReference type="InterPro" id="IPR014729">
    <property type="entry name" value="Rossmann-like_a/b/a_fold"/>
</dbReference>
<dbReference type="InterPro" id="IPR020536">
    <property type="entry name" value="ThiI_AANH"/>
</dbReference>
<dbReference type="InterPro" id="IPR054173">
    <property type="entry name" value="ThiI_fer"/>
</dbReference>
<dbReference type="InterPro" id="IPR049961">
    <property type="entry name" value="ThiI_N"/>
</dbReference>
<dbReference type="InterPro" id="IPR004114">
    <property type="entry name" value="THUMP_dom"/>
</dbReference>
<dbReference type="InterPro" id="IPR049962">
    <property type="entry name" value="THUMP_ThiI"/>
</dbReference>
<dbReference type="InterPro" id="IPR003720">
    <property type="entry name" value="tRNA_STrfase"/>
</dbReference>
<dbReference type="InterPro" id="IPR050102">
    <property type="entry name" value="tRNA_sulfurtransferase_ThiI"/>
</dbReference>
<dbReference type="NCBIfam" id="TIGR00342">
    <property type="entry name" value="tRNA uracil 4-sulfurtransferase ThiI"/>
    <property type="match status" value="1"/>
</dbReference>
<dbReference type="PANTHER" id="PTHR43209">
    <property type="entry name" value="TRNA SULFURTRANSFERASE"/>
    <property type="match status" value="1"/>
</dbReference>
<dbReference type="PANTHER" id="PTHR43209:SF1">
    <property type="entry name" value="TRNA SULFURTRANSFERASE"/>
    <property type="match status" value="1"/>
</dbReference>
<dbReference type="Pfam" id="PF02568">
    <property type="entry name" value="ThiI"/>
    <property type="match status" value="1"/>
</dbReference>
<dbReference type="Pfam" id="PF22025">
    <property type="entry name" value="ThiI_fer"/>
    <property type="match status" value="1"/>
</dbReference>
<dbReference type="Pfam" id="PF02926">
    <property type="entry name" value="THUMP"/>
    <property type="match status" value="1"/>
</dbReference>
<dbReference type="SMART" id="SM00981">
    <property type="entry name" value="THUMP"/>
    <property type="match status" value="1"/>
</dbReference>
<dbReference type="SUPFAM" id="SSF52402">
    <property type="entry name" value="Adenine nucleotide alpha hydrolases-like"/>
    <property type="match status" value="1"/>
</dbReference>
<dbReference type="SUPFAM" id="SSF143437">
    <property type="entry name" value="THUMP domain-like"/>
    <property type="match status" value="1"/>
</dbReference>
<dbReference type="PROSITE" id="PS51165">
    <property type="entry name" value="THUMP"/>
    <property type="match status" value="1"/>
</dbReference>
<comment type="function">
    <text evidence="1">Catalyzes the ATP-dependent transfer of a sulfur to tRNA to produce 4-thiouridine in position 8 of tRNAs, which functions as a near-UV photosensor. Also catalyzes the transfer of sulfur to the sulfur carrier protein ThiS, forming ThiS-thiocarboxylate. This is a step in the synthesis of thiazole, in the thiamine biosynthesis pathway. The sulfur is donated as persulfide by IscS.</text>
</comment>
<comment type="catalytic activity">
    <reaction evidence="1">
        <text>[ThiI sulfur-carrier protein]-S-sulfanyl-L-cysteine + a uridine in tRNA + 2 reduced [2Fe-2S]-[ferredoxin] + ATP + H(+) = [ThiI sulfur-carrier protein]-L-cysteine + a 4-thiouridine in tRNA + 2 oxidized [2Fe-2S]-[ferredoxin] + AMP + diphosphate</text>
        <dbReference type="Rhea" id="RHEA:24176"/>
        <dbReference type="Rhea" id="RHEA-COMP:10000"/>
        <dbReference type="Rhea" id="RHEA-COMP:10001"/>
        <dbReference type="Rhea" id="RHEA-COMP:13337"/>
        <dbReference type="Rhea" id="RHEA-COMP:13338"/>
        <dbReference type="Rhea" id="RHEA-COMP:13339"/>
        <dbReference type="Rhea" id="RHEA-COMP:13340"/>
        <dbReference type="ChEBI" id="CHEBI:15378"/>
        <dbReference type="ChEBI" id="CHEBI:29950"/>
        <dbReference type="ChEBI" id="CHEBI:30616"/>
        <dbReference type="ChEBI" id="CHEBI:33019"/>
        <dbReference type="ChEBI" id="CHEBI:33737"/>
        <dbReference type="ChEBI" id="CHEBI:33738"/>
        <dbReference type="ChEBI" id="CHEBI:61963"/>
        <dbReference type="ChEBI" id="CHEBI:65315"/>
        <dbReference type="ChEBI" id="CHEBI:136798"/>
        <dbReference type="ChEBI" id="CHEBI:456215"/>
        <dbReference type="EC" id="2.8.1.4"/>
    </reaction>
</comment>
<comment type="catalytic activity">
    <reaction evidence="1">
        <text>[ThiS sulfur-carrier protein]-C-terminal Gly-Gly-AMP + S-sulfanyl-L-cysteinyl-[cysteine desulfurase] + AH2 = [ThiS sulfur-carrier protein]-C-terminal-Gly-aminoethanethioate + L-cysteinyl-[cysteine desulfurase] + A + AMP + 2 H(+)</text>
        <dbReference type="Rhea" id="RHEA:43340"/>
        <dbReference type="Rhea" id="RHEA-COMP:12157"/>
        <dbReference type="Rhea" id="RHEA-COMP:12158"/>
        <dbReference type="Rhea" id="RHEA-COMP:12910"/>
        <dbReference type="Rhea" id="RHEA-COMP:19908"/>
        <dbReference type="ChEBI" id="CHEBI:13193"/>
        <dbReference type="ChEBI" id="CHEBI:15378"/>
        <dbReference type="ChEBI" id="CHEBI:17499"/>
        <dbReference type="ChEBI" id="CHEBI:29950"/>
        <dbReference type="ChEBI" id="CHEBI:61963"/>
        <dbReference type="ChEBI" id="CHEBI:90618"/>
        <dbReference type="ChEBI" id="CHEBI:232372"/>
        <dbReference type="ChEBI" id="CHEBI:456215"/>
    </reaction>
</comment>
<comment type="pathway">
    <text evidence="1">Cofactor biosynthesis; thiamine diphosphate biosynthesis.</text>
</comment>
<comment type="subcellular location">
    <subcellularLocation>
        <location evidence="1">Cytoplasm</location>
    </subcellularLocation>
</comment>
<comment type="similarity">
    <text evidence="1">Belongs to the ThiI family.</text>
</comment>
<proteinExistence type="inferred from homology"/>
<keyword id="KW-0067">ATP-binding</keyword>
<keyword id="KW-0963">Cytoplasm</keyword>
<keyword id="KW-0547">Nucleotide-binding</keyword>
<keyword id="KW-0694">RNA-binding</keyword>
<keyword id="KW-0784">Thiamine biosynthesis</keyword>
<keyword id="KW-0808">Transferase</keyword>
<keyword id="KW-0820">tRNA-binding</keyword>
<evidence type="ECO:0000255" key="1">
    <source>
        <dbReference type="HAMAP-Rule" id="MF_00021"/>
    </source>
</evidence>
<organism>
    <name type="scientific">Streptococcus suis (strain 05ZYH33)</name>
    <dbReference type="NCBI Taxonomy" id="391295"/>
    <lineage>
        <taxon>Bacteria</taxon>
        <taxon>Bacillati</taxon>
        <taxon>Bacillota</taxon>
        <taxon>Bacilli</taxon>
        <taxon>Lactobacillales</taxon>
        <taxon>Streptococcaceae</taxon>
        <taxon>Streptococcus</taxon>
    </lineage>
</organism>
<gene>
    <name evidence="1" type="primary">thiI</name>
    <name type="ordered locus">SSU05_0777</name>
</gene>
<feature type="chain" id="PRO_1000074303" description="Probable tRNA sulfurtransferase">
    <location>
        <begin position="1"/>
        <end position="405"/>
    </location>
</feature>
<feature type="domain" description="THUMP" evidence="1">
    <location>
        <begin position="60"/>
        <end position="165"/>
    </location>
</feature>
<feature type="binding site" evidence="1">
    <location>
        <begin position="183"/>
        <end position="184"/>
    </location>
    <ligand>
        <name>ATP</name>
        <dbReference type="ChEBI" id="CHEBI:30616"/>
    </ligand>
</feature>
<feature type="binding site" evidence="1">
    <location>
        <begin position="208"/>
        <end position="209"/>
    </location>
    <ligand>
        <name>ATP</name>
        <dbReference type="ChEBI" id="CHEBI:30616"/>
    </ligand>
</feature>
<feature type="binding site" evidence="1">
    <location>
        <position position="265"/>
    </location>
    <ligand>
        <name>ATP</name>
        <dbReference type="ChEBI" id="CHEBI:30616"/>
    </ligand>
</feature>
<feature type="binding site" evidence="1">
    <location>
        <position position="287"/>
    </location>
    <ligand>
        <name>ATP</name>
        <dbReference type="ChEBI" id="CHEBI:30616"/>
    </ligand>
</feature>
<feature type="binding site" evidence="1">
    <location>
        <position position="296"/>
    </location>
    <ligand>
        <name>ATP</name>
        <dbReference type="ChEBI" id="CHEBI:30616"/>
    </ligand>
</feature>
<protein>
    <recommendedName>
        <fullName evidence="1">Probable tRNA sulfurtransferase</fullName>
        <ecNumber evidence="1">2.8.1.4</ecNumber>
    </recommendedName>
    <alternativeName>
        <fullName evidence="1">Sulfur carrier protein ThiS sulfurtransferase</fullName>
    </alternativeName>
    <alternativeName>
        <fullName evidence="1">Thiamine biosynthesis protein ThiI</fullName>
    </alternativeName>
    <alternativeName>
        <fullName evidence="1">tRNA 4-thiouridine synthase</fullName>
    </alternativeName>
</protein>
<name>THII_STRSY</name>
<sequence length="405" mass="45238">MNYSEIMIRYGELSTKGKNKMRFVNKLRNNIKHVLSVYPEVTVYFDRDRGHVYLNGADYQEVSASLKKIFGIQNFAPSYKIEKSVPALKEAVVEIMQTIYKEGMTFKIAARRSDHSFELDSRDLNQVLGDAVFTAIPNVQVQMKSPDITLRVEIRPDAAYISHEEIKGAGGLPVGTSGKGTLMLSGGIDSPVAGYLALKRGVEIEALHFASPPYTSPGALKKAHDLTRKLTAFGGNITFIEVPFTEIQEEIKEKAPEAYLMTLTRRFMMRITDRVREERGAMVIINGESLGQVASQTLESMQAINAVTNTPVIRPVVTMDKLEIIDIAQEIDTFDISIQPFEDCCTIFAPDRPKTNPKIKNVEQYEARMDVEGLVERAVAGIIVTEITPKEEVKDEVDSLIEDLL</sequence>
<accession>A4VUF4</accession>
<reference key="1">
    <citation type="journal article" date="2007" name="PLoS ONE">
        <title>A glimpse of streptococcal toxic shock syndrome from comparative genomics of S. suis 2 Chinese isolates.</title>
        <authorList>
            <person name="Chen C."/>
            <person name="Tang J."/>
            <person name="Dong W."/>
            <person name="Wang C."/>
            <person name="Feng Y."/>
            <person name="Wang J."/>
            <person name="Zheng F."/>
            <person name="Pan X."/>
            <person name="Liu D."/>
            <person name="Li M."/>
            <person name="Song Y."/>
            <person name="Zhu X."/>
            <person name="Sun H."/>
            <person name="Feng T."/>
            <person name="Guo Z."/>
            <person name="Ju A."/>
            <person name="Ge J."/>
            <person name="Dong Y."/>
            <person name="Sun W."/>
            <person name="Jiang Y."/>
            <person name="Wang J."/>
            <person name="Yan J."/>
            <person name="Yang H."/>
            <person name="Wang X."/>
            <person name="Gao G.F."/>
            <person name="Yang R."/>
            <person name="Wang J."/>
            <person name="Yu J."/>
        </authorList>
    </citation>
    <scope>NUCLEOTIDE SEQUENCE [LARGE SCALE GENOMIC DNA]</scope>
    <source>
        <strain>05ZYH33</strain>
    </source>
</reference>